<feature type="chain" id="PRO_1000191272" description="Cell division topological specificity factor">
    <location>
        <begin position="1"/>
        <end position="91"/>
    </location>
</feature>
<evidence type="ECO:0000255" key="1">
    <source>
        <dbReference type="HAMAP-Rule" id="MF_00262"/>
    </source>
</evidence>
<keyword id="KW-0131">Cell cycle</keyword>
<keyword id="KW-0132">Cell division</keyword>
<reference key="1">
    <citation type="submission" date="2009-01" db="EMBL/GenBank/DDBJ databases">
        <title>Complete sequence of Chloroflexus sp. Y-400-fl.</title>
        <authorList>
            <consortium name="US DOE Joint Genome Institute"/>
            <person name="Lucas S."/>
            <person name="Copeland A."/>
            <person name="Lapidus A."/>
            <person name="Glavina del Rio T."/>
            <person name="Dalin E."/>
            <person name="Tice H."/>
            <person name="Bruce D."/>
            <person name="Goodwin L."/>
            <person name="Pitluck S."/>
            <person name="Sims D."/>
            <person name="Kiss H."/>
            <person name="Brettin T."/>
            <person name="Detter J.C."/>
            <person name="Han C."/>
            <person name="Larimer F."/>
            <person name="Land M."/>
            <person name="Hauser L."/>
            <person name="Kyrpides N."/>
            <person name="Ovchinnikova G."/>
            <person name="Bryant D.A."/>
            <person name="Richardson P."/>
        </authorList>
    </citation>
    <scope>NUCLEOTIDE SEQUENCE [LARGE SCALE GENOMIC DNA]</scope>
    <source>
        <strain>ATCC 29364 / DSM 637 / Y-400-fl</strain>
    </source>
</reference>
<accession>B9LFG6</accession>
<comment type="function">
    <text evidence="1">Prevents the cell division inhibition by proteins MinC and MinD at internal division sites while permitting inhibition at polar sites. This ensures cell division at the proper site by restricting the formation of a division septum at the midpoint of the long axis of the cell.</text>
</comment>
<comment type="similarity">
    <text evidence="1">Belongs to the MinE family.</text>
</comment>
<protein>
    <recommendedName>
        <fullName evidence="1">Cell division topological specificity factor</fullName>
    </recommendedName>
</protein>
<proteinExistence type="inferred from homology"/>
<gene>
    <name evidence="1" type="primary">minE</name>
    <name type="ordered locus">Chy400_0007</name>
</gene>
<sequence length="91" mass="10361">MSFLNGLFGRKRDSSAELAKQRLLTVLIDDRYKLTPEMMAQMKADLAEVLKRYLPAIDAEQIEVTLSRGEAHDLLKADVPLRRATDHPPNR</sequence>
<name>MINE_CHLSY</name>
<dbReference type="EMBL" id="CP001364">
    <property type="protein sequence ID" value="ACM51454.1"/>
    <property type="molecule type" value="Genomic_DNA"/>
</dbReference>
<dbReference type="SMR" id="B9LFG6"/>
<dbReference type="KEGG" id="chl:Chy400_0007"/>
<dbReference type="HOGENOM" id="CLU_137929_1_1_0"/>
<dbReference type="OrthoDB" id="9796578at2"/>
<dbReference type="GO" id="GO:0051301">
    <property type="term" value="P:cell division"/>
    <property type="evidence" value="ECO:0007669"/>
    <property type="project" value="UniProtKB-KW"/>
</dbReference>
<dbReference type="GO" id="GO:0032955">
    <property type="term" value="P:regulation of division septum assembly"/>
    <property type="evidence" value="ECO:0007669"/>
    <property type="project" value="InterPro"/>
</dbReference>
<dbReference type="Gene3D" id="3.30.1070.10">
    <property type="entry name" value="Cell division topological specificity factor MinE"/>
    <property type="match status" value="1"/>
</dbReference>
<dbReference type="HAMAP" id="MF_00262">
    <property type="entry name" value="MinE"/>
    <property type="match status" value="1"/>
</dbReference>
<dbReference type="InterPro" id="IPR005527">
    <property type="entry name" value="MinE"/>
</dbReference>
<dbReference type="InterPro" id="IPR036707">
    <property type="entry name" value="MinE_sf"/>
</dbReference>
<dbReference type="NCBIfam" id="TIGR01215">
    <property type="entry name" value="minE"/>
    <property type="match status" value="1"/>
</dbReference>
<dbReference type="Pfam" id="PF03776">
    <property type="entry name" value="MinE"/>
    <property type="match status" value="1"/>
</dbReference>
<dbReference type="SUPFAM" id="SSF55229">
    <property type="entry name" value="Cell division protein MinE topological specificity domain"/>
    <property type="match status" value="1"/>
</dbReference>
<organism>
    <name type="scientific">Chloroflexus aurantiacus (strain ATCC 29364 / DSM 637 / Y-400-fl)</name>
    <dbReference type="NCBI Taxonomy" id="480224"/>
    <lineage>
        <taxon>Bacteria</taxon>
        <taxon>Bacillati</taxon>
        <taxon>Chloroflexota</taxon>
        <taxon>Chloroflexia</taxon>
        <taxon>Chloroflexales</taxon>
        <taxon>Chloroflexineae</taxon>
        <taxon>Chloroflexaceae</taxon>
        <taxon>Chloroflexus</taxon>
    </lineage>
</organism>